<dbReference type="EC" id="2.4.2.9" evidence="1"/>
<dbReference type="EMBL" id="CP001598">
    <property type="protein sequence ID" value="ACQ49027.1"/>
    <property type="molecule type" value="Genomic_DNA"/>
</dbReference>
<dbReference type="RefSeq" id="WP_000517539.1">
    <property type="nucleotide sequence ID" value="NC_012659.1"/>
</dbReference>
<dbReference type="SMR" id="C3P1G4"/>
<dbReference type="GeneID" id="93005808"/>
<dbReference type="KEGG" id="bai:BAA_5585"/>
<dbReference type="HOGENOM" id="CLU_067096_2_2_9"/>
<dbReference type="UniPathway" id="UPA00574">
    <property type="reaction ID" value="UER00636"/>
</dbReference>
<dbReference type="GO" id="GO:0005525">
    <property type="term" value="F:GTP binding"/>
    <property type="evidence" value="ECO:0007669"/>
    <property type="project" value="UniProtKB-KW"/>
</dbReference>
<dbReference type="GO" id="GO:0000287">
    <property type="term" value="F:magnesium ion binding"/>
    <property type="evidence" value="ECO:0007669"/>
    <property type="project" value="UniProtKB-UniRule"/>
</dbReference>
<dbReference type="GO" id="GO:0004845">
    <property type="term" value="F:uracil phosphoribosyltransferase activity"/>
    <property type="evidence" value="ECO:0007669"/>
    <property type="project" value="UniProtKB-UniRule"/>
</dbReference>
<dbReference type="GO" id="GO:0044206">
    <property type="term" value="P:UMP salvage"/>
    <property type="evidence" value="ECO:0007669"/>
    <property type="project" value="UniProtKB-UniRule"/>
</dbReference>
<dbReference type="GO" id="GO:0006223">
    <property type="term" value="P:uracil salvage"/>
    <property type="evidence" value="ECO:0007669"/>
    <property type="project" value="InterPro"/>
</dbReference>
<dbReference type="CDD" id="cd06223">
    <property type="entry name" value="PRTases_typeI"/>
    <property type="match status" value="1"/>
</dbReference>
<dbReference type="FunFam" id="3.40.50.2020:FF:000003">
    <property type="entry name" value="Uracil phosphoribosyltransferase"/>
    <property type="match status" value="1"/>
</dbReference>
<dbReference type="Gene3D" id="3.40.50.2020">
    <property type="match status" value="1"/>
</dbReference>
<dbReference type="HAMAP" id="MF_01218_B">
    <property type="entry name" value="Upp_B"/>
    <property type="match status" value="1"/>
</dbReference>
<dbReference type="InterPro" id="IPR000836">
    <property type="entry name" value="PRibTrfase_dom"/>
</dbReference>
<dbReference type="InterPro" id="IPR029057">
    <property type="entry name" value="PRTase-like"/>
</dbReference>
<dbReference type="InterPro" id="IPR034332">
    <property type="entry name" value="Upp_B"/>
</dbReference>
<dbReference type="InterPro" id="IPR050054">
    <property type="entry name" value="UPRTase/APRTase"/>
</dbReference>
<dbReference type="InterPro" id="IPR005765">
    <property type="entry name" value="Ura_phspho_trans"/>
</dbReference>
<dbReference type="NCBIfam" id="NF001097">
    <property type="entry name" value="PRK00129.1"/>
    <property type="match status" value="1"/>
</dbReference>
<dbReference type="NCBIfam" id="TIGR01091">
    <property type="entry name" value="upp"/>
    <property type="match status" value="1"/>
</dbReference>
<dbReference type="PANTHER" id="PTHR32315">
    <property type="entry name" value="ADENINE PHOSPHORIBOSYLTRANSFERASE"/>
    <property type="match status" value="1"/>
</dbReference>
<dbReference type="PANTHER" id="PTHR32315:SF4">
    <property type="entry name" value="URACIL PHOSPHORIBOSYLTRANSFERASE, CHLOROPLASTIC"/>
    <property type="match status" value="1"/>
</dbReference>
<dbReference type="Pfam" id="PF14681">
    <property type="entry name" value="UPRTase"/>
    <property type="match status" value="1"/>
</dbReference>
<dbReference type="SUPFAM" id="SSF53271">
    <property type="entry name" value="PRTase-like"/>
    <property type="match status" value="1"/>
</dbReference>
<comment type="function">
    <text evidence="1">Catalyzes the conversion of uracil and 5-phospho-alpha-D-ribose 1-diphosphate (PRPP) to UMP and diphosphate.</text>
</comment>
<comment type="catalytic activity">
    <reaction evidence="1">
        <text>UMP + diphosphate = 5-phospho-alpha-D-ribose 1-diphosphate + uracil</text>
        <dbReference type="Rhea" id="RHEA:13017"/>
        <dbReference type="ChEBI" id="CHEBI:17568"/>
        <dbReference type="ChEBI" id="CHEBI:33019"/>
        <dbReference type="ChEBI" id="CHEBI:57865"/>
        <dbReference type="ChEBI" id="CHEBI:58017"/>
        <dbReference type="EC" id="2.4.2.9"/>
    </reaction>
</comment>
<comment type="cofactor">
    <cofactor evidence="1">
        <name>Mg(2+)</name>
        <dbReference type="ChEBI" id="CHEBI:18420"/>
    </cofactor>
    <text evidence="1">Binds 1 Mg(2+) ion per subunit. The magnesium is bound as Mg-PRPP.</text>
</comment>
<comment type="activity regulation">
    <text evidence="1">Allosterically activated by GTP.</text>
</comment>
<comment type="pathway">
    <text evidence="1">Pyrimidine metabolism; UMP biosynthesis via salvage pathway; UMP from uracil: step 1/1.</text>
</comment>
<comment type="similarity">
    <text evidence="1">Belongs to the UPRTase family.</text>
</comment>
<accession>C3P1G4</accession>
<organism>
    <name type="scientific">Bacillus anthracis (strain A0248)</name>
    <dbReference type="NCBI Taxonomy" id="592021"/>
    <lineage>
        <taxon>Bacteria</taxon>
        <taxon>Bacillati</taxon>
        <taxon>Bacillota</taxon>
        <taxon>Bacilli</taxon>
        <taxon>Bacillales</taxon>
        <taxon>Bacillaceae</taxon>
        <taxon>Bacillus</taxon>
        <taxon>Bacillus cereus group</taxon>
    </lineage>
</organism>
<keyword id="KW-0021">Allosteric enzyme</keyword>
<keyword id="KW-0328">Glycosyltransferase</keyword>
<keyword id="KW-0342">GTP-binding</keyword>
<keyword id="KW-0460">Magnesium</keyword>
<keyword id="KW-0547">Nucleotide-binding</keyword>
<keyword id="KW-0808">Transferase</keyword>
<sequence length="209" mass="22901">MGKLYVFDHPLIQHKITYIRDKNTGTKDFRELVDEVASLMAFEITRDLPLKDIEIETPVSKATTKVIAGKKLGLIPILRAGLGMVDGILKLIPAAKVGHVGLYRDPKTLQPVEYYVKLPTDVEERDFIVLDPMLATGGSAAEAINSLKKRGAKQIKLMCIVAAPEGVKVVQEEHPDVDIYVAALDEKLNDHGYVVPGLGDAGDRLFGTK</sequence>
<proteinExistence type="inferred from homology"/>
<reference key="1">
    <citation type="submission" date="2009-04" db="EMBL/GenBank/DDBJ databases">
        <title>Genome sequence of Bacillus anthracis A0248.</title>
        <authorList>
            <person name="Dodson R.J."/>
            <person name="Munk A.C."/>
            <person name="Bruce D."/>
            <person name="Detter C."/>
            <person name="Tapia R."/>
            <person name="Sutton G."/>
            <person name="Sims D."/>
            <person name="Brettin T."/>
        </authorList>
    </citation>
    <scope>NUCLEOTIDE SEQUENCE [LARGE SCALE GENOMIC DNA]</scope>
    <source>
        <strain>A0248</strain>
    </source>
</reference>
<feature type="chain" id="PRO_1000164807" description="Uracil phosphoribosyltransferase">
    <location>
        <begin position="1"/>
        <end position="209"/>
    </location>
</feature>
<feature type="binding site" evidence="1">
    <location>
        <position position="79"/>
    </location>
    <ligand>
        <name>5-phospho-alpha-D-ribose 1-diphosphate</name>
        <dbReference type="ChEBI" id="CHEBI:58017"/>
    </ligand>
</feature>
<feature type="binding site" evidence="1">
    <location>
        <position position="104"/>
    </location>
    <ligand>
        <name>5-phospho-alpha-D-ribose 1-diphosphate</name>
        <dbReference type="ChEBI" id="CHEBI:58017"/>
    </ligand>
</feature>
<feature type="binding site" evidence="1">
    <location>
        <begin position="131"/>
        <end position="139"/>
    </location>
    <ligand>
        <name>5-phospho-alpha-D-ribose 1-diphosphate</name>
        <dbReference type="ChEBI" id="CHEBI:58017"/>
    </ligand>
</feature>
<feature type="binding site" evidence="1">
    <location>
        <position position="194"/>
    </location>
    <ligand>
        <name>uracil</name>
        <dbReference type="ChEBI" id="CHEBI:17568"/>
    </ligand>
</feature>
<feature type="binding site" evidence="1">
    <location>
        <begin position="199"/>
        <end position="201"/>
    </location>
    <ligand>
        <name>uracil</name>
        <dbReference type="ChEBI" id="CHEBI:17568"/>
    </ligand>
</feature>
<feature type="binding site" evidence="1">
    <location>
        <position position="200"/>
    </location>
    <ligand>
        <name>5-phospho-alpha-D-ribose 1-diphosphate</name>
        <dbReference type="ChEBI" id="CHEBI:58017"/>
    </ligand>
</feature>
<name>UPP_BACAA</name>
<evidence type="ECO:0000255" key="1">
    <source>
        <dbReference type="HAMAP-Rule" id="MF_01218"/>
    </source>
</evidence>
<protein>
    <recommendedName>
        <fullName evidence="1">Uracil phosphoribosyltransferase</fullName>
        <ecNumber evidence="1">2.4.2.9</ecNumber>
    </recommendedName>
    <alternativeName>
        <fullName evidence="1">UMP pyrophosphorylase</fullName>
    </alternativeName>
    <alternativeName>
        <fullName evidence="1">UPRTase</fullName>
    </alternativeName>
</protein>
<gene>
    <name evidence="1" type="primary">upp</name>
    <name type="ordered locus">BAA_5585</name>
</gene>